<reference key="1">
    <citation type="journal article" date="2012" name="Cell">
        <title>Tiki1 is required for head formation via Wnt cleavage-oxidation and inactivation.</title>
        <authorList>
            <person name="Zhang X."/>
            <person name="Abreu J.G."/>
            <person name="Yokota C."/>
            <person name="Macdonald B.T."/>
            <person name="Singh S."/>
            <person name="Coburn K.L."/>
            <person name="Cheong S.M."/>
            <person name="Zhang M.M."/>
            <person name="Ye Q.Z."/>
            <person name="Hang H.C."/>
            <person name="Steen H."/>
            <person name="He X."/>
        </authorList>
    </citation>
    <scope>NUCLEOTIDE SEQUENCE [MRNA]</scope>
</reference>
<reference key="2">
    <citation type="journal article" date="2010" name="Nature">
        <title>The Amphimedon queenslandica genome and the evolution of animal complexity.</title>
        <authorList>
            <person name="Srivastava M."/>
            <person name="Simakov O."/>
            <person name="Chapman J."/>
            <person name="Fahey B."/>
            <person name="Gauthier M.E."/>
            <person name="Mitros T."/>
            <person name="Richards G.S."/>
            <person name="Conaco C."/>
            <person name="Dacre M."/>
            <person name="Hellsten U."/>
            <person name="Larroux C."/>
            <person name="Putnam N.H."/>
            <person name="Stanke M."/>
            <person name="Adamska M."/>
            <person name="Darling A."/>
            <person name="Degnan S.M."/>
            <person name="Oakley T.H."/>
            <person name="Plachetzki D.C."/>
            <person name="Zhai Y."/>
            <person name="Adamski M."/>
            <person name="Calcino A."/>
            <person name="Cummins S.F."/>
            <person name="Goodstein D.M."/>
            <person name="Harris C."/>
            <person name="Jackson D.J."/>
            <person name="Leys S.P."/>
            <person name="Shu S."/>
            <person name="Woodcroft B.J."/>
            <person name="Vervoort M."/>
            <person name="Kosik K.S."/>
            <person name="Manning G."/>
            <person name="Degnan B.M."/>
            <person name="Rokhsar D.S."/>
        </authorList>
    </citation>
    <scope>NUCLEOTIDE SEQUENCE [LARGE SCALE GENOMIC DNA]</scope>
</reference>
<sequence>MQVKIVQVFPCLVLLVKLVLLSVLLPSATGSYHCSNNATQNSYLWRIEASPPIYLFGTMHVPYKKLWDDVPDNVKSVLSLSEHLCVELRLTDSETSKNLSACRYLPKNETLESVLPGGLYVRVLKYFVRIQNQFPKWLFGNASINGLSRIESDRLFHAMIGNWNRLRPVWLLMLISSLSRENVQERSIPLLDVFLDRAAEGMGKNVEAVEVYKEQCRPFNRLNNTKVFVALRKLLDYLEPLADGPISSTDSDLETYNCGDFKSLVSARPILPLPSSSKLPNLTSEEAGDLESINEFLVSQIVYRRNRRMSKTIMSLLSRQRNETYLFAIGAGHFVGERNVVHMLKKKGYSVNRLSVTETIPGPPLPKNIISLGDPSSQLTILNISSTIPTLPPNRPSHVPPTLSPETIARIIQSVFNNTQSIYTVDSVEVTPTTTSLNSATASTTVATPTSSVTPPTSSSSQTRSLTISDSQRTSDDSAFIPSASSGLRYNIGLVCVTLFFVLLIITSAL</sequence>
<organism>
    <name type="scientific">Amphimedon queenslandica</name>
    <name type="common">Sponge</name>
    <dbReference type="NCBI Taxonomy" id="400682"/>
    <lineage>
        <taxon>Eukaryota</taxon>
        <taxon>Metazoa</taxon>
        <taxon>Porifera</taxon>
        <taxon>Demospongiae</taxon>
        <taxon>Heteroscleromorpha</taxon>
        <taxon>Haplosclerida</taxon>
        <taxon>Niphatidae</taxon>
        <taxon>Amphimedon</taxon>
    </lineage>
</organism>
<proteinExistence type="evidence at transcript level"/>
<keyword id="KW-0325">Glycoprotein</keyword>
<keyword id="KW-0378">Hydrolase</keyword>
<keyword id="KW-0472">Membrane</keyword>
<keyword id="KW-0479">Metal-binding</keyword>
<keyword id="KW-0482">Metalloprotease</keyword>
<keyword id="KW-0645">Protease</keyword>
<keyword id="KW-1185">Reference proteome</keyword>
<keyword id="KW-0732">Signal</keyword>
<keyword id="KW-0812">Transmembrane</keyword>
<keyword id="KW-1133">Transmembrane helix</keyword>
<evidence type="ECO:0000250" key="1"/>
<evidence type="ECO:0000255" key="2"/>
<evidence type="ECO:0000256" key="3">
    <source>
        <dbReference type="SAM" id="MobiDB-lite"/>
    </source>
</evidence>
<evidence type="ECO:0000305" key="4"/>
<feature type="signal peptide" evidence="2">
    <location>
        <begin position="1"/>
        <end position="30"/>
    </location>
</feature>
<feature type="chain" id="PRO_0000419454" description="Metalloprotease TIKI homolog">
    <location>
        <begin position="31"/>
        <end position="510"/>
    </location>
</feature>
<feature type="topological domain" description="Extracellular" evidence="2">
    <location>
        <begin position="31"/>
        <end position="489"/>
    </location>
</feature>
<feature type="transmembrane region" description="Helical" evidence="2">
    <location>
        <begin position="490"/>
        <end position="510"/>
    </location>
</feature>
<feature type="region of interest" description="Disordered" evidence="3">
    <location>
        <begin position="435"/>
        <end position="477"/>
    </location>
</feature>
<feature type="compositionally biased region" description="Low complexity" evidence="3">
    <location>
        <begin position="435"/>
        <end position="471"/>
    </location>
</feature>
<feature type="glycosylation site" description="N-linked (GlcNAc...) asparagine" evidence="2">
    <location>
        <position position="37"/>
    </location>
</feature>
<feature type="glycosylation site" description="N-linked (GlcNAc...) asparagine" evidence="2">
    <location>
        <position position="98"/>
    </location>
</feature>
<feature type="glycosylation site" description="N-linked (GlcNAc...) asparagine" evidence="2">
    <location>
        <position position="108"/>
    </location>
</feature>
<feature type="glycosylation site" description="N-linked (GlcNAc...) asparagine" evidence="2">
    <location>
        <position position="141"/>
    </location>
</feature>
<feature type="glycosylation site" description="N-linked (GlcNAc...) asparagine" evidence="2">
    <location>
        <position position="223"/>
    </location>
</feature>
<feature type="glycosylation site" description="N-linked (GlcNAc...) asparagine" evidence="2">
    <location>
        <position position="281"/>
    </location>
</feature>
<feature type="glycosylation site" description="N-linked (GlcNAc...) asparagine" evidence="2">
    <location>
        <position position="322"/>
    </location>
</feature>
<feature type="glycosylation site" description="N-linked (GlcNAc...) asparagine" evidence="2">
    <location>
        <position position="383"/>
    </location>
</feature>
<feature type="glycosylation site" description="N-linked (GlcNAc...) asparagine" evidence="2">
    <location>
        <position position="417"/>
    </location>
</feature>
<dbReference type="EC" id="3.4.-.-"/>
<dbReference type="EMBL" id="JQ653423">
    <property type="protein sequence ID" value="AFN02889.1"/>
    <property type="molecule type" value="mRNA"/>
</dbReference>
<dbReference type="RefSeq" id="NP_001266208.1">
    <property type="nucleotide sequence ID" value="NM_001279279.1"/>
</dbReference>
<dbReference type="EnsemblMetazoa" id="NM_001279279.1">
    <property type="protein sequence ID" value="NP_001266208.1"/>
    <property type="gene ID" value="GeneID_100633175"/>
</dbReference>
<dbReference type="GeneID" id="100633175"/>
<dbReference type="KEGG" id="aqu:100633175"/>
<dbReference type="eggNOG" id="ENOG502QPR1">
    <property type="taxonomic scope" value="Eukaryota"/>
</dbReference>
<dbReference type="InParanoid" id="I1FQB6"/>
<dbReference type="OrthoDB" id="10040378at2759"/>
<dbReference type="Proteomes" id="UP000007879">
    <property type="component" value="Unassembled WGS sequence"/>
</dbReference>
<dbReference type="GO" id="GO:0016020">
    <property type="term" value="C:membrane"/>
    <property type="evidence" value="ECO:0007669"/>
    <property type="project" value="UniProtKB-SubCell"/>
</dbReference>
<dbReference type="GO" id="GO:0046872">
    <property type="term" value="F:metal ion binding"/>
    <property type="evidence" value="ECO:0007669"/>
    <property type="project" value="UniProtKB-KW"/>
</dbReference>
<dbReference type="GO" id="GO:0004222">
    <property type="term" value="F:metalloendopeptidase activity"/>
    <property type="evidence" value="ECO:0007669"/>
    <property type="project" value="TreeGrafter"/>
</dbReference>
<dbReference type="GO" id="GO:0030178">
    <property type="term" value="P:negative regulation of Wnt signaling pathway"/>
    <property type="evidence" value="ECO:0007669"/>
    <property type="project" value="InterPro"/>
</dbReference>
<dbReference type="GO" id="GO:0006508">
    <property type="term" value="P:proteolysis"/>
    <property type="evidence" value="ECO:0007669"/>
    <property type="project" value="UniProtKB-KW"/>
</dbReference>
<dbReference type="CDD" id="cd14789">
    <property type="entry name" value="Tiki"/>
    <property type="match status" value="1"/>
</dbReference>
<dbReference type="InterPro" id="IPR040230">
    <property type="entry name" value="TIKI1/2-like"/>
</dbReference>
<dbReference type="InterPro" id="IPR002816">
    <property type="entry name" value="TraB/PrgY/GumN_fam"/>
</dbReference>
<dbReference type="PANTHER" id="PTHR31120">
    <property type="entry name" value="METALLOPROTEASE TIKI"/>
    <property type="match status" value="1"/>
</dbReference>
<dbReference type="PANTHER" id="PTHR31120:SF6">
    <property type="entry name" value="METALLOPROTEASE TIKI HOMOLOG"/>
    <property type="match status" value="1"/>
</dbReference>
<dbReference type="Pfam" id="PF01963">
    <property type="entry name" value="TraB_PrgY_gumN"/>
    <property type="match status" value="1"/>
</dbReference>
<comment type="function">
    <text evidence="1">Metalloprotease.</text>
</comment>
<comment type="cofactor">
    <cofactor evidence="1">
        <name>Mn(2+)</name>
        <dbReference type="ChEBI" id="CHEBI:29035"/>
    </cofactor>
    <cofactor evidence="1">
        <name>Co(2+)</name>
        <dbReference type="ChEBI" id="CHEBI:48828"/>
    </cofactor>
    <text evidence="1">Divalent metal cations. Mn(2+) or Co(2+).</text>
</comment>
<comment type="subcellular location">
    <subcellularLocation>
        <location evidence="4">Membrane</location>
        <topology evidence="4">Single-pass type I membrane protein</topology>
    </subcellularLocation>
</comment>
<comment type="similarity">
    <text evidence="4">Belongs to the TIKI family.</text>
</comment>
<protein>
    <recommendedName>
        <fullName>Metalloprotease TIKI homolog</fullName>
        <ecNumber>3.4.-.-</ecNumber>
    </recommendedName>
</protein>
<accession>I1FQB6</accession>
<accession>I6TUB5</accession>
<name>TIKI1_AMPQE</name>